<protein>
    <recommendedName>
        <fullName>Agouti-signaling protein</fullName>
        <shortName>ASP</shortName>
    </recommendedName>
    <alternativeName>
        <fullName>Agouti switch protein</fullName>
    </alternativeName>
</protein>
<gene>
    <name type="primary">ASIP</name>
</gene>
<name>ASIP_MACNG</name>
<dbReference type="EMBL" id="EF094485">
    <property type="protein sequence ID" value="ABL84283.1"/>
    <property type="molecule type" value="Genomic_DNA"/>
</dbReference>
<dbReference type="EMBL" id="AB299211">
    <property type="protein sequence ID" value="BAF80795.1"/>
    <property type="molecule type" value="Genomic_DNA"/>
</dbReference>
<dbReference type="GlyCosmos" id="A1YL68">
    <property type="glycosylation" value="1 site, No reported glycans"/>
</dbReference>
<dbReference type="GO" id="GO:0005615">
    <property type="term" value="C:extracellular space"/>
    <property type="evidence" value="ECO:0000250"/>
    <property type="project" value="UniProtKB"/>
</dbReference>
<dbReference type="GO" id="GO:0031779">
    <property type="term" value="F:melanocortin receptor binding"/>
    <property type="evidence" value="ECO:0007669"/>
    <property type="project" value="TreeGrafter"/>
</dbReference>
<dbReference type="GO" id="GO:0005184">
    <property type="term" value="F:neuropeptide hormone activity"/>
    <property type="evidence" value="ECO:0007669"/>
    <property type="project" value="TreeGrafter"/>
</dbReference>
<dbReference type="GO" id="GO:0009755">
    <property type="term" value="P:hormone-mediated signaling pathway"/>
    <property type="evidence" value="ECO:0007669"/>
    <property type="project" value="InterPro"/>
</dbReference>
<dbReference type="GO" id="GO:0042438">
    <property type="term" value="P:melanin biosynthetic process"/>
    <property type="evidence" value="ECO:0000250"/>
    <property type="project" value="UniProtKB"/>
</dbReference>
<dbReference type="GO" id="GO:0032438">
    <property type="term" value="P:melanosome organization"/>
    <property type="evidence" value="ECO:0007669"/>
    <property type="project" value="TreeGrafter"/>
</dbReference>
<dbReference type="FunFam" id="4.10.760.10:FF:000002">
    <property type="entry name" value="Agouti-signaling protein"/>
    <property type="match status" value="1"/>
</dbReference>
<dbReference type="Gene3D" id="4.10.760.10">
    <property type="entry name" value="Agouti domain"/>
    <property type="match status" value="1"/>
</dbReference>
<dbReference type="InterPro" id="IPR007733">
    <property type="entry name" value="Agouti"/>
</dbReference>
<dbReference type="InterPro" id="IPR027300">
    <property type="entry name" value="Agouti_dom"/>
</dbReference>
<dbReference type="InterPro" id="IPR036836">
    <property type="entry name" value="Agouti_dom_sf"/>
</dbReference>
<dbReference type="PANTHER" id="PTHR16551">
    <property type="entry name" value="AGOUTI RELATED"/>
    <property type="match status" value="1"/>
</dbReference>
<dbReference type="PANTHER" id="PTHR16551:SF1">
    <property type="entry name" value="AGOUTI-SIGNALING PROTEIN"/>
    <property type="match status" value="1"/>
</dbReference>
<dbReference type="Pfam" id="PF05039">
    <property type="entry name" value="Agouti"/>
    <property type="match status" value="1"/>
</dbReference>
<dbReference type="SMART" id="SM00792">
    <property type="entry name" value="Agouti"/>
    <property type="match status" value="1"/>
</dbReference>
<dbReference type="SUPFAM" id="SSF57055">
    <property type="entry name" value="Agouti-related protein"/>
    <property type="match status" value="1"/>
</dbReference>
<dbReference type="PROSITE" id="PS60024">
    <property type="entry name" value="AGOUTI_1"/>
    <property type="match status" value="1"/>
</dbReference>
<dbReference type="PROSITE" id="PS51150">
    <property type="entry name" value="AGOUTI_2"/>
    <property type="match status" value="1"/>
</dbReference>
<evidence type="ECO:0000250" key="1"/>
<evidence type="ECO:0000250" key="2">
    <source>
        <dbReference type="UniProtKB" id="P42127"/>
    </source>
</evidence>
<evidence type="ECO:0000250" key="3">
    <source>
        <dbReference type="UniProtKB" id="Q03288"/>
    </source>
</evidence>
<evidence type="ECO:0000255" key="4"/>
<evidence type="ECO:0000255" key="5">
    <source>
        <dbReference type="PROSITE-ProRule" id="PRU00494"/>
    </source>
</evidence>
<evidence type="ECO:0000256" key="6">
    <source>
        <dbReference type="SAM" id="MobiDB-lite"/>
    </source>
</evidence>
<reference key="1">
    <citation type="journal article" date="2006" name="Mamm. Genome">
        <title>Investigation of the role of the agouti signaling protein gene (ASIP) in coat color evolution in primates.</title>
        <authorList>
            <person name="Mundy N.I."/>
            <person name="Kelly J."/>
        </authorList>
    </citation>
    <scope>NUCLEOTIDE SEQUENCE [GENOMIC DNA]</scope>
</reference>
<reference key="2">
    <citation type="submission" date="2007-03" db="EMBL/GenBank/DDBJ databases">
        <title>Association of the agouti signaling protein gene with coat color variation in the macaques.</title>
        <authorList>
            <person name="Nakayama K."/>
            <person name="Shotake T."/>
            <person name="Takenaka O."/>
            <person name="Ishida T."/>
        </authorList>
    </citation>
    <scope>NUCLEOTIDE SEQUENCE [GENOMIC DNA]</scope>
</reference>
<keyword id="KW-1015">Disulfide bond</keyword>
<keyword id="KW-0325">Glycoprotein</keyword>
<keyword id="KW-0960">Knottin</keyword>
<keyword id="KW-0964">Secreted</keyword>
<keyword id="KW-0732">Signal</keyword>
<sequence>MDVTRLLLATLLVFLCFFTAYSHPPPEEKLRDDRSLRSNSSVNLLDFPSVSIVALNKNSKQISRKEAEKKRSSKKEASMKKVARPRTPLSAPCVATRDSCKSPAPACCDPCASCQCRFFRSACSCRVLSLNC</sequence>
<accession>A1YL68</accession>
<accession>A8CEM3</accession>
<feature type="signal peptide" evidence="4">
    <location>
        <begin position="1"/>
        <end position="22"/>
    </location>
</feature>
<feature type="chain" id="PRO_0000285058" description="Agouti-signaling protein">
    <location>
        <begin position="23"/>
        <end position="132"/>
    </location>
</feature>
<feature type="domain" description="Agouti" evidence="5">
    <location>
        <begin position="93"/>
        <end position="132"/>
    </location>
</feature>
<feature type="region of interest" description="Disordered" evidence="6">
    <location>
        <begin position="61"/>
        <end position="87"/>
    </location>
</feature>
<feature type="compositionally biased region" description="Basic and acidic residues" evidence="6">
    <location>
        <begin position="63"/>
        <end position="79"/>
    </location>
</feature>
<feature type="glycosylation site" description="N-linked (GlcNAc...) asparagine" evidence="4">
    <location>
        <position position="39"/>
    </location>
</feature>
<feature type="disulfide bond" evidence="5">
    <location>
        <begin position="93"/>
        <end position="108"/>
    </location>
</feature>
<feature type="disulfide bond" evidence="5">
    <location>
        <begin position="100"/>
        <end position="114"/>
    </location>
</feature>
<feature type="disulfide bond" evidence="5">
    <location>
        <begin position="107"/>
        <end position="125"/>
    </location>
</feature>
<feature type="disulfide bond" evidence="5">
    <location>
        <begin position="111"/>
        <end position="132"/>
    </location>
</feature>
<feature type="disulfide bond" evidence="5">
    <location>
        <begin position="116"/>
        <end position="123"/>
    </location>
</feature>
<comment type="function">
    <text evidence="3">Involved in the regulation of melanogenesis. The binding of ASP to MC1R precludes alpha-MSH initiated signaling and thus blocks production of cAMP, leading to a down-regulation of eumelanogenesis (brown/black pigment) and thus increasing synthesis of pheomelanin (yellow/red pigment) (By similarity).</text>
</comment>
<comment type="subcellular location">
    <subcellularLocation>
        <location evidence="2">Secreted</location>
    </subcellularLocation>
</comment>
<comment type="domain">
    <text evidence="1">The presence of a 'disulfide through disulfide knot' structurally defines this protein as a knottin.</text>
</comment>
<proteinExistence type="inferred from homology"/>
<organism>
    <name type="scientific">Macaca nigra</name>
    <name type="common">Celebes black macaque</name>
    <name type="synonym">Crested black macaque</name>
    <dbReference type="NCBI Taxonomy" id="54600"/>
    <lineage>
        <taxon>Eukaryota</taxon>
        <taxon>Metazoa</taxon>
        <taxon>Chordata</taxon>
        <taxon>Craniata</taxon>
        <taxon>Vertebrata</taxon>
        <taxon>Euteleostomi</taxon>
        <taxon>Mammalia</taxon>
        <taxon>Eutheria</taxon>
        <taxon>Euarchontoglires</taxon>
        <taxon>Primates</taxon>
        <taxon>Haplorrhini</taxon>
        <taxon>Catarrhini</taxon>
        <taxon>Cercopithecidae</taxon>
        <taxon>Cercopithecinae</taxon>
        <taxon>Macaca</taxon>
    </lineage>
</organism>